<gene>
    <name type="primary">RPL4</name>
    <name type="synonym">RPL1</name>
</gene>
<comment type="function">
    <text evidence="1">Component of the large ribosomal subunit. The ribosome is a large ribonucleoprotein complex responsible for the synthesis of proteins in the cell.</text>
</comment>
<comment type="subunit">
    <text evidence="1 2">Component of the large ribosomal subunit. May bind IPO9 with low affinity (By similarity). Interacts with RBM3 (By similarity).</text>
</comment>
<comment type="subcellular location">
    <subcellularLocation>
        <location evidence="1">Cytoplasm</location>
    </subcellularLocation>
</comment>
<comment type="PTM">
    <text evidence="3">Citrullinated by PADI4.</text>
</comment>
<comment type="similarity">
    <text evidence="5">Belongs to the universal ribosomal protein uL4 family.</text>
</comment>
<protein>
    <recommendedName>
        <fullName evidence="5">Large ribosomal subunit protein uL4</fullName>
    </recommendedName>
    <alternativeName>
        <fullName>60S ribosomal protein L1</fullName>
    </alternativeName>
    <alternativeName>
        <fullName>60S ribosomal protein L4</fullName>
    </alternativeName>
</protein>
<dbReference type="EMBL" id="X99909">
    <property type="protein sequence ID" value="CAA68182.1"/>
    <property type="molecule type" value="mRNA"/>
</dbReference>
<dbReference type="PDB" id="4V5Z">
    <property type="method" value="EM"/>
    <property type="resolution" value="8.70 A"/>
    <property type="chains" value="c=1-421"/>
</dbReference>
<dbReference type="PDBsum" id="4V5Z"/>
<dbReference type="SMR" id="Q28346"/>
<dbReference type="FunCoup" id="Q28346">
    <property type="interactions" value="1563"/>
</dbReference>
<dbReference type="STRING" id="9615.ENSCAFP00000047295"/>
<dbReference type="PaxDb" id="9612-ENSCAFP00000036039"/>
<dbReference type="eggNOG" id="KOG1475">
    <property type="taxonomic scope" value="Eukaryota"/>
</dbReference>
<dbReference type="InParanoid" id="Q28346"/>
<dbReference type="Proteomes" id="UP000002254">
    <property type="component" value="Unplaced"/>
</dbReference>
<dbReference type="Proteomes" id="UP000694429">
    <property type="component" value="Unplaced"/>
</dbReference>
<dbReference type="Proteomes" id="UP000694542">
    <property type="component" value="Unplaced"/>
</dbReference>
<dbReference type="Proteomes" id="UP000805418">
    <property type="component" value="Unplaced"/>
</dbReference>
<dbReference type="GO" id="GO:0022625">
    <property type="term" value="C:cytosolic large ribosomal subunit"/>
    <property type="evidence" value="ECO:0000318"/>
    <property type="project" value="GO_Central"/>
</dbReference>
<dbReference type="GO" id="GO:0003723">
    <property type="term" value="F:RNA binding"/>
    <property type="evidence" value="ECO:0000318"/>
    <property type="project" value="GO_Central"/>
</dbReference>
<dbReference type="GO" id="GO:0003735">
    <property type="term" value="F:structural constituent of ribosome"/>
    <property type="evidence" value="ECO:0000318"/>
    <property type="project" value="GO_Central"/>
</dbReference>
<dbReference type="GO" id="GO:0006412">
    <property type="term" value="P:translation"/>
    <property type="evidence" value="ECO:0007669"/>
    <property type="project" value="InterPro"/>
</dbReference>
<dbReference type="FunFam" id="3.40.1370.10:FF:000002">
    <property type="entry name" value="60S ribosomal protein L4"/>
    <property type="match status" value="1"/>
</dbReference>
<dbReference type="Gene3D" id="3.40.1370.10">
    <property type="match status" value="1"/>
</dbReference>
<dbReference type="InterPro" id="IPR025755">
    <property type="entry name" value="Ribos_uL4_C_dom"/>
</dbReference>
<dbReference type="InterPro" id="IPR002136">
    <property type="entry name" value="Ribosomal_uL4"/>
</dbReference>
<dbReference type="InterPro" id="IPR023574">
    <property type="entry name" value="Ribosomal_uL4_dom_sf"/>
</dbReference>
<dbReference type="InterPro" id="IPR013000">
    <property type="entry name" value="Ribosomal_uL4_euk/arc_CS"/>
</dbReference>
<dbReference type="InterPro" id="IPR045240">
    <property type="entry name" value="Ribosomal_uL4_euk/arch"/>
</dbReference>
<dbReference type="PANTHER" id="PTHR19431">
    <property type="entry name" value="60S RIBOSOMAL PROTEIN L4"/>
    <property type="match status" value="1"/>
</dbReference>
<dbReference type="Pfam" id="PF14374">
    <property type="entry name" value="Ribos_L4_asso_C"/>
    <property type="match status" value="1"/>
</dbReference>
<dbReference type="Pfam" id="PF00573">
    <property type="entry name" value="Ribosomal_L4"/>
    <property type="match status" value="1"/>
</dbReference>
<dbReference type="SUPFAM" id="SSF52166">
    <property type="entry name" value="Ribosomal protein L4"/>
    <property type="match status" value="1"/>
</dbReference>
<dbReference type="PROSITE" id="PS00939">
    <property type="entry name" value="RIBOSOMAL_L1E"/>
    <property type="match status" value="1"/>
</dbReference>
<proteinExistence type="evidence at protein level"/>
<evidence type="ECO:0000250" key="1">
    <source>
        <dbReference type="UniProtKB" id="P36578"/>
    </source>
</evidence>
<evidence type="ECO:0000250" key="2">
    <source>
        <dbReference type="UniProtKB" id="P50878"/>
    </source>
</evidence>
<evidence type="ECO:0000250" key="3">
    <source>
        <dbReference type="UniProtKB" id="Q9D8E6"/>
    </source>
</evidence>
<evidence type="ECO:0000256" key="4">
    <source>
        <dbReference type="SAM" id="MobiDB-lite"/>
    </source>
</evidence>
<evidence type="ECO:0000305" key="5"/>
<keyword id="KW-0002">3D-structure</keyword>
<keyword id="KW-0007">Acetylation</keyword>
<keyword id="KW-0164">Citrullination</keyword>
<keyword id="KW-0963">Cytoplasm</keyword>
<keyword id="KW-1017">Isopeptide bond</keyword>
<keyword id="KW-0488">Methylation</keyword>
<keyword id="KW-0597">Phosphoprotein</keyword>
<keyword id="KW-1185">Reference proteome</keyword>
<keyword id="KW-0687">Ribonucleoprotein</keyword>
<keyword id="KW-0689">Ribosomal protein</keyword>
<keyword id="KW-0832">Ubl conjugation</keyword>
<feature type="initiator methionine" description="Removed" evidence="1">
    <location>
        <position position="1"/>
    </location>
</feature>
<feature type="chain" id="PRO_0000129349" description="Large ribosomal subunit protein uL4">
    <location>
        <begin position="2"/>
        <end position="421"/>
    </location>
</feature>
<feature type="region of interest" description="Disordered" evidence="4">
    <location>
        <begin position="359"/>
        <end position="421"/>
    </location>
</feature>
<feature type="compositionally biased region" description="Basic residues" evidence="4">
    <location>
        <begin position="368"/>
        <end position="391"/>
    </location>
</feature>
<feature type="compositionally biased region" description="Basic and acidic residues" evidence="4">
    <location>
        <begin position="401"/>
        <end position="421"/>
    </location>
</feature>
<feature type="modified residue" description="N-acetylalanine" evidence="1">
    <location>
        <position position="2"/>
    </location>
</feature>
<feature type="modified residue" description="N6-acetyllysine" evidence="1">
    <location>
        <position position="14"/>
    </location>
</feature>
<feature type="modified residue" description="Omega-N-methylarginine" evidence="3">
    <location>
        <position position="97"/>
    </location>
</feature>
<feature type="modified residue" description="N6-acetyllysine" evidence="1">
    <location>
        <position position="106"/>
    </location>
</feature>
<feature type="modified residue" description="N6-acetyllysine" evidence="3">
    <location>
        <position position="259"/>
    </location>
</feature>
<feature type="modified residue" description="Phosphothreonine" evidence="1">
    <location>
        <position position="266"/>
    </location>
</feature>
<feature type="modified residue" description="Phosphoserine" evidence="2">
    <location>
        <position position="290"/>
    </location>
</feature>
<feature type="modified residue" description="Citrulline" evidence="3">
    <location>
        <position position="300"/>
    </location>
</feature>
<feature type="modified residue" description="N6-acetyllysine" evidence="1">
    <location>
        <position position="333"/>
    </location>
</feature>
<feature type="modified residue" description="N6-acetyllysine" evidence="3">
    <location>
        <position position="353"/>
    </location>
</feature>
<feature type="modified residue" description="N6-acetyllysine; alternate" evidence="3">
    <location>
        <position position="361"/>
    </location>
</feature>
<feature type="modified residue" description="Phosphoserine" evidence="1">
    <location>
        <position position="362"/>
    </location>
</feature>
<feature type="cross-link" description="Glycyl lysine isopeptide (Lys-Gly) (interchain with G-Cter in SUMO2)" evidence="1">
    <location>
        <position position="239"/>
    </location>
</feature>
<feature type="cross-link" description="Glycyl lysine isopeptide (Lys-Gly) (interchain with G-Cter in SUMO2)" evidence="1">
    <location>
        <position position="327"/>
    </location>
</feature>
<feature type="cross-link" description="Glycyl lysine isopeptide (Lys-Gly) (interchain with G-Cter in SUMO1); alternate" evidence="1">
    <location>
        <position position="361"/>
    </location>
</feature>
<name>RL4_CANLF</name>
<reference key="1">
    <citation type="submission" date="1996-08" db="EMBL/GenBank/DDBJ databases">
        <authorList>
            <person name="Sandholzer U."/>
        </authorList>
    </citation>
    <scope>NUCLEOTIDE SEQUENCE [MRNA] OF 2-421</scope>
    <source>
        <strain>Mongrel</strain>
    </source>
</reference>
<reference key="2">
    <citation type="journal article" date="2008" name="Structure">
        <title>Structure of the mammalian 80S ribosome at 8.7 A resolution.</title>
        <authorList>
            <person name="Chandramouli P."/>
            <person name="Topf M."/>
            <person name="Menetret J.F."/>
            <person name="Eswar N."/>
            <person name="Cannone J.J."/>
            <person name="Gutell R.R."/>
            <person name="Sali A."/>
            <person name="Akey C.W."/>
        </authorList>
    </citation>
    <scope>STRUCTURE BY ELECTRON MICROSCOPY (8.7 ANGSTROMS)</scope>
</reference>
<sequence length="421" mass="47515">MACARPLISVYSEKGESSGKNVTLPAVFKAPIRPDIVNFVHTNLRKNNRQPYAVSELAGHQTSAESWGTGRAVARIPRVRGGGTHRSGQGAFGNMCRGGRMFAPTKTWRRWHRRVNTTQKRYAICSALACLSLPALVMSKGHRIEEVPELPLVVEDKVEGYKKTKEAVLLLKKLKAWNDIKKVYASQRMRAGKGKMRNRRRIQRRGPCIIYNEDNGIIKAFRKHPGITLLNVSKLNILKLAPGGHVGRFCIWTESAFRKLDDLYGTWRKAASLKSNYNLPMHKMLNTDLSRILKMPRDPRALRAPRKKIHRRVLKKNPLKNLRIMLKLNPYAKTMRRNTILRQAKNHKLRMDKAAAALEAKSEEKGVPGKKPRRKKGKKTVGVKKPKKPVVGKKAAATKKPAADKKPAEKKPTTEEKKPAA</sequence>
<accession>Q28346</accession>
<organism>
    <name type="scientific">Canis lupus familiaris</name>
    <name type="common">Dog</name>
    <name type="synonym">Canis familiaris</name>
    <dbReference type="NCBI Taxonomy" id="9615"/>
    <lineage>
        <taxon>Eukaryota</taxon>
        <taxon>Metazoa</taxon>
        <taxon>Chordata</taxon>
        <taxon>Craniata</taxon>
        <taxon>Vertebrata</taxon>
        <taxon>Euteleostomi</taxon>
        <taxon>Mammalia</taxon>
        <taxon>Eutheria</taxon>
        <taxon>Laurasiatheria</taxon>
        <taxon>Carnivora</taxon>
        <taxon>Caniformia</taxon>
        <taxon>Canidae</taxon>
        <taxon>Canis</taxon>
    </lineage>
</organism>